<reference key="1">
    <citation type="journal article" date="2004" name="Biochimie">
        <title>Biochemical, genetic and physiological characterization of venom components from two species of scorpions: Centruroides exilicauda Wood and Centruroides sculpturatus Ewing.</title>
        <authorList>
            <person name="Valdez-Cruz N.A."/>
            <person name="Davila S."/>
            <person name="Licea A."/>
            <person name="Corona M."/>
            <person name="Zamudio F.Z."/>
            <person name="Garcia-Valdes J."/>
            <person name="Boyer L."/>
            <person name="Possani L.D."/>
        </authorList>
    </citation>
    <scope>NUCLEOTIDE SEQUENCE [MRNA]</scope>
    <source>
        <tissue>Venom gland</tissue>
    </source>
</reference>
<comment type="function">
    <text evidence="1">Beta toxins bind voltage-independently at site-4 of sodium channels (Nav) and shift the voltage of activation toward more negative potentials thereby affecting sodium channel activation and promoting spontaneous and repetitive firing.</text>
</comment>
<comment type="subcellular location">
    <subcellularLocation>
        <location evidence="1">Secreted</location>
    </subcellularLocation>
</comment>
<comment type="tissue specificity">
    <text>Expressed by the venom gland.</text>
</comment>
<comment type="domain">
    <text evidence="4">Has the structural arrangement of an alpha-helix connected to antiparallel beta-sheets by disulfide bonds (CS-alpha/beta).</text>
</comment>
<comment type="similarity">
    <text evidence="4">Belongs to the long (4 C-C) scorpion toxin superfamily. Sodium channel inhibitor family. Beta subfamily.</text>
</comment>
<sequence length="73" mass="8045">ATGNVWAKDGYLVIIKTGCKYNCYILGKNKYCNSECKEVGAGYGYCYAFGCWCEGLPESIPTWPLPDKTCGTK</sequence>
<proteinExistence type="evidence at transcript level"/>
<protein>
    <recommendedName>
        <fullName>Neurotoxin Cex13</fullName>
    </recommendedName>
</protein>
<feature type="signal peptide" evidence="2">
    <location>
        <begin position="1" status="less than"/>
        <end position="7"/>
    </location>
</feature>
<feature type="chain" id="PRO_0000254085" description="Neurotoxin Cex13">
    <location>
        <begin position="8"/>
        <end position="70"/>
    </location>
</feature>
<feature type="propeptide" id="PRO_0000254086">
    <location>
        <begin position="71"/>
        <end position="73"/>
    </location>
</feature>
<feature type="domain" description="LCN-type CS-alpha/beta" evidence="3">
    <location>
        <begin position="8"/>
        <end position="71"/>
    </location>
</feature>
<feature type="modified residue" description="Cysteine amide" evidence="2">
    <location>
        <position position="70"/>
    </location>
</feature>
<feature type="disulfide bond" evidence="3">
    <location>
        <begin position="19"/>
        <end position="70"/>
    </location>
</feature>
<feature type="disulfide bond" evidence="3">
    <location>
        <begin position="23"/>
        <end position="46"/>
    </location>
</feature>
<feature type="disulfide bond" evidence="3">
    <location>
        <begin position="32"/>
        <end position="51"/>
    </location>
</feature>
<feature type="disulfide bond" evidence="3">
    <location>
        <begin position="36"/>
        <end position="53"/>
    </location>
</feature>
<feature type="non-terminal residue">
    <location>
        <position position="1"/>
    </location>
</feature>
<dbReference type="EMBL" id="AY649871">
    <property type="protein sequence ID" value="AAT98004.1"/>
    <property type="molecule type" value="mRNA"/>
</dbReference>
<dbReference type="SMR" id="Q68PG2"/>
<dbReference type="GO" id="GO:0005576">
    <property type="term" value="C:extracellular region"/>
    <property type="evidence" value="ECO:0007669"/>
    <property type="project" value="UniProtKB-SubCell"/>
</dbReference>
<dbReference type="GO" id="GO:0019871">
    <property type="term" value="F:sodium channel inhibitor activity"/>
    <property type="evidence" value="ECO:0007669"/>
    <property type="project" value="InterPro"/>
</dbReference>
<dbReference type="GO" id="GO:0090729">
    <property type="term" value="F:toxin activity"/>
    <property type="evidence" value="ECO:0007669"/>
    <property type="project" value="UniProtKB-KW"/>
</dbReference>
<dbReference type="GO" id="GO:0006952">
    <property type="term" value="P:defense response"/>
    <property type="evidence" value="ECO:0007669"/>
    <property type="project" value="InterPro"/>
</dbReference>
<dbReference type="CDD" id="cd23106">
    <property type="entry name" value="neurotoxins_LC_scorpion"/>
    <property type="match status" value="1"/>
</dbReference>
<dbReference type="FunFam" id="3.30.30.10:FF:000002">
    <property type="entry name" value="Alpha-like toxin BmK-M1"/>
    <property type="match status" value="1"/>
</dbReference>
<dbReference type="Gene3D" id="3.30.30.10">
    <property type="entry name" value="Knottin, scorpion toxin-like"/>
    <property type="match status" value="1"/>
</dbReference>
<dbReference type="InterPro" id="IPR044062">
    <property type="entry name" value="LCN-type_CS_alpha_beta_dom"/>
</dbReference>
<dbReference type="InterPro" id="IPR003614">
    <property type="entry name" value="Scorpion_toxin-like"/>
</dbReference>
<dbReference type="InterPro" id="IPR036574">
    <property type="entry name" value="Scorpion_toxin-like_sf"/>
</dbReference>
<dbReference type="InterPro" id="IPR018218">
    <property type="entry name" value="Scorpion_toxinL"/>
</dbReference>
<dbReference type="InterPro" id="IPR002061">
    <property type="entry name" value="Scorpion_toxinL/defensin"/>
</dbReference>
<dbReference type="Pfam" id="PF00537">
    <property type="entry name" value="Toxin_3"/>
    <property type="match status" value="1"/>
</dbReference>
<dbReference type="PRINTS" id="PR00285">
    <property type="entry name" value="SCORPNTOXIN"/>
</dbReference>
<dbReference type="SMART" id="SM00505">
    <property type="entry name" value="Knot1"/>
    <property type="match status" value="1"/>
</dbReference>
<dbReference type="SUPFAM" id="SSF57095">
    <property type="entry name" value="Scorpion toxin-like"/>
    <property type="match status" value="1"/>
</dbReference>
<dbReference type="PROSITE" id="PS51863">
    <property type="entry name" value="LCN_CSAB"/>
    <property type="match status" value="1"/>
</dbReference>
<name>SCX13_CENEX</name>
<keyword id="KW-0027">Amidation</keyword>
<keyword id="KW-1015">Disulfide bond</keyword>
<keyword id="KW-0872">Ion channel impairing toxin</keyword>
<keyword id="KW-0528">Neurotoxin</keyword>
<keyword id="KW-0964">Secreted</keyword>
<keyword id="KW-0732">Signal</keyword>
<keyword id="KW-0800">Toxin</keyword>
<keyword id="KW-0738">Voltage-gated sodium channel impairing toxin</keyword>
<accession>Q68PG2</accession>
<organism>
    <name type="scientific">Centruroides exilicauda</name>
    <name type="common">Bark scorpion</name>
    <name type="synonym">Buthus exilicauda</name>
    <dbReference type="NCBI Taxonomy" id="6879"/>
    <lineage>
        <taxon>Eukaryota</taxon>
        <taxon>Metazoa</taxon>
        <taxon>Ecdysozoa</taxon>
        <taxon>Arthropoda</taxon>
        <taxon>Chelicerata</taxon>
        <taxon>Arachnida</taxon>
        <taxon>Scorpiones</taxon>
        <taxon>Buthida</taxon>
        <taxon>Buthoidea</taxon>
        <taxon>Buthidae</taxon>
        <taxon>Centruroides</taxon>
    </lineage>
</organism>
<evidence type="ECO:0000250" key="1"/>
<evidence type="ECO:0000255" key="2"/>
<evidence type="ECO:0000255" key="3">
    <source>
        <dbReference type="PROSITE-ProRule" id="PRU01210"/>
    </source>
</evidence>
<evidence type="ECO:0000305" key="4"/>